<comment type="function">
    <text evidence="1 2">Required for cytochrome c complex (COX) IV assembly and function Protects COX assembly from oxidation-induced degradation, COX being the terminal component of the mitochondrial respiratory chain.</text>
</comment>
<comment type="subcellular location">
    <subcellularLocation>
        <location evidence="2">Mitochondrion inner membrane</location>
        <topology evidence="1">Peripheral membrane protein</topology>
        <orientation evidence="1">Matrix side</orientation>
    </subcellularLocation>
</comment>
<comment type="induction">
    <text evidence="1 2">In conditions of increased oxidative stress, the protein is stabilized, increasing its mature intramitochondrial form and thereby protecting COX from oxidatively induced degradation.</text>
</comment>
<comment type="PTM">
    <text evidence="1">N-terminal mitochondrial targeting sequence is cleaved from the mature protein once in the mitochondrion.</text>
</comment>
<comment type="PTM">
    <text evidence="1">In normal conditions, the cytoplasmic precursor protein is rapidly degraded by the ubiquitination-proteasome system (UPS). Oxidative stress induces protein stabilization and import into mitochondria where it protects COX from degradation.</text>
</comment>
<comment type="similarity">
    <text evidence="4">Belongs to the COA8 family.</text>
</comment>
<comment type="caution">
    <text evidence="1 2">First thought to play a role in the regulation of apoptosis, mediating mitochondria-induced cell death in vascular smooth muscle cells through the release of cytochrome c (COX) from mitochondria and the activation of the caspase cascade. However, recent studies show that it is not directly involved in apoptosis regulation but in the protection of COX from oxidatively induced degradation.</text>
</comment>
<gene>
    <name type="primary">Coa8</name>
    <name type="synonym">Apop1</name>
    <name type="synonym">Apopt1</name>
</gene>
<organism>
    <name type="scientific">Rattus norvegicus</name>
    <name type="common">Rat</name>
    <dbReference type="NCBI Taxonomy" id="10116"/>
    <lineage>
        <taxon>Eukaryota</taxon>
        <taxon>Metazoa</taxon>
        <taxon>Chordata</taxon>
        <taxon>Craniata</taxon>
        <taxon>Vertebrata</taxon>
        <taxon>Euteleostomi</taxon>
        <taxon>Mammalia</taxon>
        <taxon>Eutheria</taxon>
        <taxon>Euarchontoglires</taxon>
        <taxon>Glires</taxon>
        <taxon>Rodentia</taxon>
        <taxon>Myomorpha</taxon>
        <taxon>Muroidea</taxon>
        <taxon>Muridae</taxon>
        <taxon>Murinae</taxon>
        <taxon>Rattus</taxon>
    </lineage>
</organism>
<dbReference type="EMBL" id="BC107661">
    <property type="protein sequence ID" value="AAI07662.1"/>
    <property type="molecule type" value="mRNA"/>
</dbReference>
<dbReference type="RefSeq" id="NP_001032858.1">
    <property type="nucleotide sequence ID" value="NM_001037769.2"/>
</dbReference>
<dbReference type="RefSeq" id="XP_017450002.1">
    <property type="nucleotide sequence ID" value="XM_017594513.1"/>
</dbReference>
<dbReference type="RefSeq" id="XP_017458789.1">
    <property type="nucleotide sequence ID" value="XM_017603300.1"/>
</dbReference>
<dbReference type="SMR" id="Q32Q90"/>
<dbReference type="FunCoup" id="Q32Q90">
    <property type="interactions" value="827"/>
</dbReference>
<dbReference type="STRING" id="10116.ENSRNOP00000015373"/>
<dbReference type="PhosphoSitePlus" id="Q32Q90"/>
<dbReference type="PaxDb" id="10116-ENSRNOP00000015373"/>
<dbReference type="GeneID" id="299341"/>
<dbReference type="KEGG" id="rno:299341"/>
<dbReference type="UCSC" id="RGD:1304719">
    <property type="organism name" value="rat"/>
</dbReference>
<dbReference type="AGR" id="RGD:1304719"/>
<dbReference type="CTD" id="84334"/>
<dbReference type="RGD" id="1304719">
    <property type="gene designation" value="Coa8"/>
</dbReference>
<dbReference type="VEuPathDB" id="HostDB:ENSRNOG00000011542"/>
<dbReference type="eggNOG" id="KOG4094">
    <property type="taxonomic scope" value="Eukaryota"/>
</dbReference>
<dbReference type="HOGENOM" id="CLU_118274_0_0_1"/>
<dbReference type="InParanoid" id="Q32Q90"/>
<dbReference type="OrthoDB" id="67595at9989"/>
<dbReference type="PhylomeDB" id="Q32Q90"/>
<dbReference type="TreeFam" id="TF315168"/>
<dbReference type="PRO" id="PR:Q32Q90"/>
<dbReference type="Proteomes" id="UP000002494">
    <property type="component" value="Chromosome 6"/>
</dbReference>
<dbReference type="Bgee" id="ENSRNOG00000011542">
    <property type="expression patterns" value="Expressed in pancreas and 19 other cell types or tissues"/>
</dbReference>
<dbReference type="GO" id="GO:0099617">
    <property type="term" value="C:matrix side of mitochondrial inner membrane"/>
    <property type="evidence" value="ECO:0000250"/>
    <property type="project" value="UniProtKB"/>
</dbReference>
<dbReference type="GO" id="GO:0005739">
    <property type="term" value="C:mitochondrion"/>
    <property type="evidence" value="ECO:0000250"/>
    <property type="project" value="UniProtKB"/>
</dbReference>
<dbReference type="GO" id="GO:0097193">
    <property type="term" value="P:intrinsic apoptotic signaling pathway"/>
    <property type="evidence" value="ECO:0000266"/>
    <property type="project" value="RGD"/>
</dbReference>
<dbReference type="GO" id="GO:0033617">
    <property type="term" value="P:mitochondrial cytochrome c oxidase assembly"/>
    <property type="evidence" value="ECO:0000250"/>
    <property type="project" value="UniProtKB"/>
</dbReference>
<dbReference type="GO" id="GO:1903427">
    <property type="term" value="P:negative regulation of reactive oxygen species biosynthetic process"/>
    <property type="evidence" value="ECO:0000266"/>
    <property type="project" value="RGD"/>
</dbReference>
<dbReference type="GO" id="GO:0050821">
    <property type="term" value="P:protein stabilization"/>
    <property type="evidence" value="ECO:0000250"/>
    <property type="project" value="UniProtKB"/>
</dbReference>
<dbReference type="GO" id="GO:0000302">
    <property type="term" value="P:response to reactive oxygen species"/>
    <property type="evidence" value="ECO:0000250"/>
    <property type="project" value="UniProtKB"/>
</dbReference>
<dbReference type="InterPro" id="IPR018796">
    <property type="entry name" value="COA8"/>
</dbReference>
<dbReference type="PANTHER" id="PTHR31107">
    <property type="entry name" value="APOPTOGENIC PROTEIN 1, MITOCHONDRIAL"/>
    <property type="match status" value="1"/>
</dbReference>
<dbReference type="PANTHER" id="PTHR31107:SF2">
    <property type="entry name" value="CYTOCHROME C OXIDASE ASSEMBLY FACTOR 8"/>
    <property type="match status" value="1"/>
</dbReference>
<dbReference type="Pfam" id="PF10231">
    <property type="entry name" value="COA8"/>
    <property type="match status" value="1"/>
</dbReference>
<protein>
    <recommendedName>
        <fullName>Cytochrome c oxidase assembly factor 8</fullName>
        <shortName>COA8</shortName>
    </recommendedName>
    <alternativeName>
        <fullName>Apoptogenic protein 1, mitochondrial</fullName>
        <shortName>APOP-1</shortName>
    </alternativeName>
</protein>
<accession>Q32Q90</accession>
<feature type="transit peptide" description="Mitochondrion" evidence="3">
    <location>
        <begin position="1"/>
        <end position="26"/>
    </location>
</feature>
<feature type="chain" id="PRO_0000353109" description="Cytochrome c oxidase assembly factor 8">
    <location>
        <begin position="27"/>
        <end position="193"/>
    </location>
</feature>
<name>COA8_RAT</name>
<reference key="1">
    <citation type="journal article" date="2004" name="Genome Res.">
        <title>The status, quality, and expansion of the NIH full-length cDNA project: the Mammalian Gene Collection (MGC).</title>
        <authorList>
            <consortium name="The MGC Project Team"/>
        </authorList>
    </citation>
    <scope>NUCLEOTIDE SEQUENCE [LARGE SCALE MRNA]</scope>
    <source>
        <tissue>Prostate</tissue>
    </source>
</reference>
<proteinExistence type="evidence at transcript level"/>
<sequence>MAALRPGSKALRRLLCRSFSGGGVRLARERATERRDAASSRVSRFCPPRQSCHDWIGPPDKYSNLRPVHFHVPENESPLEQRLRELRQETQEWNQQFWAKQNLSFNKEKEEFIYSRLQAKGSGPRTESGQRATLDAEEMADFYKDFLSKNFQKHMCYNRDWYKRNFAITFFMGKVALERMWSKLKQKPKKTSG</sequence>
<evidence type="ECO:0000250" key="1">
    <source>
        <dbReference type="UniProtKB" id="Q96IL0"/>
    </source>
</evidence>
<evidence type="ECO:0000250" key="2">
    <source>
        <dbReference type="UniProtKB" id="Q9CQW7"/>
    </source>
</evidence>
<evidence type="ECO:0000255" key="3"/>
<evidence type="ECO:0000305" key="4"/>
<keyword id="KW-0053">Apoptosis</keyword>
<keyword id="KW-0472">Membrane</keyword>
<keyword id="KW-0496">Mitochondrion</keyword>
<keyword id="KW-0999">Mitochondrion inner membrane</keyword>
<keyword id="KW-1185">Reference proteome</keyword>
<keyword id="KW-0809">Transit peptide</keyword>
<keyword id="KW-0832">Ubl conjugation</keyword>